<sequence length="314" mass="34776">MEITFLGTSSGVPTRSRNVSSVALRLPQRAEVWLFDCGEGTQHQLLRSDVKISQITRIFITHMHGDHIYGLMGLLASCGLAGNAQDIEIYGPPDLIDYLKACAKYSQVKLSHRVRVYGVRPGILYEDEEFTVSCGLLKHRIPAFGYRIAEKNRPGRFDVEKATALGIPPGPIYGQLKRGEVVTLPDGRRINGKDLCGETETGRKVIYCTDTVFCDGAVELAQDGDVLIHEATFAHQDAQLAFDRLHSTSTMAAQVALIAGVKQLIMTHFSPRYAPGNVLQLDDLLAEAKAIFANTILARDFMTYEVPRLRRKTE</sequence>
<keyword id="KW-0255">Endonuclease</keyword>
<keyword id="KW-0378">Hydrolase</keyword>
<keyword id="KW-0479">Metal-binding</keyword>
<keyword id="KW-0540">Nuclease</keyword>
<keyword id="KW-1185">Reference proteome</keyword>
<keyword id="KW-0819">tRNA processing</keyword>
<keyword id="KW-0862">Zinc</keyword>
<name>RNZ_RIPO1</name>
<accession>B7K1N1</accession>
<feature type="chain" id="PRO_1000187951" description="Ribonuclease Z">
    <location>
        <begin position="1"/>
        <end position="314"/>
    </location>
</feature>
<feature type="active site" description="Proton acceptor" evidence="1">
    <location>
        <position position="66"/>
    </location>
</feature>
<feature type="binding site" evidence="1">
    <location>
        <position position="62"/>
    </location>
    <ligand>
        <name>Zn(2+)</name>
        <dbReference type="ChEBI" id="CHEBI:29105"/>
        <label>1</label>
        <note>catalytic</note>
    </ligand>
</feature>
<feature type="binding site" evidence="1">
    <location>
        <position position="64"/>
    </location>
    <ligand>
        <name>Zn(2+)</name>
        <dbReference type="ChEBI" id="CHEBI:29105"/>
        <label>1</label>
        <note>catalytic</note>
    </ligand>
</feature>
<feature type="binding site" evidence="1">
    <location>
        <position position="66"/>
    </location>
    <ligand>
        <name>Zn(2+)</name>
        <dbReference type="ChEBI" id="CHEBI:29105"/>
        <label>2</label>
        <note>catalytic</note>
    </ligand>
</feature>
<feature type="binding site" evidence="1">
    <location>
        <position position="67"/>
    </location>
    <ligand>
        <name>Zn(2+)</name>
        <dbReference type="ChEBI" id="CHEBI:29105"/>
        <label>2</label>
        <note>catalytic</note>
    </ligand>
</feature>
<feature type="binding site" evidence="1">
    <location>
        <position position="139"/>
    </location>
    <ligand>
        <name>Zn(2+)</name>
        <dbReference type="ChEBI" id="CHEBI:29105"/>
        <label>1</label>
        <note>catalytic</note>
    </ligand>
</feature>
<feature type="binding site" evidence="1">
    <location>
        <position position="210"/>
    </location>
    <ligand>
        <name>Zn(2+)</name>
        <dbReference type="ChEBI" id="CHEBI:29105"/>
        <label>1</label>
        <note>catalytic</note>
    </ligand>
</feature>
<feature type="binding site" evidence="1">
    <location>
        <position position="210"/>
    </location>
    <ligand>
        <name>Zn(2+)</name>
        <dbReference type="ChEBI" id="CHEBI:29105"/>
        <label>2</label>
        <note>catalytic</note>
    </ligand>
</feature>
<feature type="binding site" evidence="1">
    <location>
        <position position="268"/>
    </location>
    <ligand>
        <name>Zn(2+)</name>
        <dbReference type="ChEBI" id="CHEBI:29105"/>
        <label>2</label>
        <note>catalytic</note>
    </ligand>
</feature>
<gene>
    <name evidence="1" type="primary">rnz</name>
    <name type="ordered locus">PCC8801_3611</name>
</gene>
<dbReference type="EC" id="3.1.26.11" evidence="1"/>
<dbReference type="EMBL" id="CP001287">
    <property type="protein sequence ID" value="ACK67573.1"/>
    <property type="molecule type" value="Genomic_DNA"/>
</dbReference>
<dbReference type="RefSeq" id="WP_012596831.1">
    <property type="nucleotide sequence ID" value="NC_011726.1"/>
</dbReference>
<dbReference type="SMR" id="B7K1N1"/>
<dbReference type="STRING" id="41431.PCC8801_3611"/>
<dbReference type="KEGG" id="cyp:PCC8801_3611"/>
<dbReference type="eggNOG" id="COG1234">
    <property type="taxonomic scope" value="Bacteria"/>
</dbReference>
<dbReference type="HOGENOM" id="CLU_031317_2_0_3"/>
<dbReference type="OrthoDB" id="9800940at2"/>
<dbReference type="Proteomes" id="UP000008204">
    <property type="component" value="Chromosome"/>
</dbReference>
<dbReference type="GO" id="GO:0042781">
    <property type="term" value="F:3'-tRNA processing endoribonuclease activity"/>
    <property type="evidence" value="ECO:0007669"/>
    <property type="project" value="UniProtKB-UniRule"/>
</dbReference>
<dbReference type="GO" id="GO:0008270">
    <property type="term" value="F:zinc ion binding"/>
    <property type="evidence" value="ECO:0007669"/>
    <property type="project" value="UniProtKB-UniRule"/>
</dbReference>
<dbReference type="CDD" id="cd07717">
    <property type="entry name" value="RNaseZ_ZiPD-like_MBL-fold"/>
    <property type="match status" value="1"/>
</dbReference>
<dbReference type="FunFam" id="3.60.15.10:FF:000002">
    <property type="entry name" value="Ribonuclease Z"/>
    <property type="match status" value="1"/>
</dbReference>
<dbReference type="Gene3D" id="3.60.15.10">
    <property type="entry name" value="Ribonuclease Z/Hydroxyacylglutathione hydrolase-like"/>
    <property type="match status" value="1"/>
</dbReference>
<dbReference type="HAMAP" id="MF_01818">
    <property type="entry name" value="RNase_Z_BN"/>
    <property type="match status" value="1"/>
</dbReference>
<dbReference type="InterPro" id="IPR001279">
    <property type="entry name" value="Metallo-B-lactamas"/>
</dbReference>
<dbReference type="InterPro" id="IPR036866">
    <property type="entry name" value="RibonucZ/Hydroxyglut_hydro"/>
</dbReference>
<dbReference type="InterPro" id="IPR013471">
    <property type="entry name" value="RNase_Z/BN"/>
</dbReference>
<dbReference type="NCBIfam" id="NF000801">
    <property type="entry name" value="PRK00055.1-3"/>
    <property type="match status" value="1"/>
</dbReference>
<dbReference type="NCBIfam" id="TIGR02651">
    <property type="entry name" value="RNase_Z"/>
    <property type="match status" value="1"/>
</dbReference>
<dbReference type="PANTHER" id="PTHR46018">
    <property type="entry name" value="ZINC PHOSPHODIESTERASE ELAC PROTEIN 1"/>
    <property type="match status" value="1"/>
</dbReference>
<dbReference type="PANTHER" id="PTHR46018:SF2">
    <property type="entry name" value="ZINC PHOSPHODIESTERASE ELAC PROTEIN 1"/>
    <property type="match status" value="1"/>
</dbReference>
<dbReference type="Pfam" id="PF12706">
    <property type="entry name" value="Lactamase_B_2"/>
    <property type="match status" value="1"/>
</dbReference>
<dbReference type="SMART" id="SM00849">
    <property type="entry name" value="Lactamase_B"/>
    <property type="match status" value="1"/>
</dbReference>
<dbReference type="SUPFAM" id="SSF56281">
    <property type="entry name" value="Metallo-hydrolase/oxidoreductase"/>
    <property type="match status" value="1"/>
</dbReference>
<reference key="1">
    <citation type="journal article" date="2011" name="MBio">
        <title>Novel metabolic attributes of the genus Cyanothece, comprising a group of unicellular nitrogen-fixing Cyanobacteria.</title>
        <authorList>
            <person name="Bandyopadhyay A."/>
            <person name="Elvitigala T."/>
            <person name="Welsh E."/>
            <person name="Stockel J."/>
            <person name="Liberton M."/>
            <person name="Min H."/>
            <person name="Sherman L.A."/>
            <person name="Pakrasi H.B."/>
        </authorList>
    </citation>
    <scope>NUCLEOTIDE SEQUENCE [LARGE SCALE GENOMIC DNA]</scope>
    <source>
        <strain>PCC 8801 / RF-1</strain>
    </source>
</reference>
<comment type="function">
    <text evidence="1">Zinc phosphodiesterase, which displays some tRNA 3'-processing endonuclease activity. Probably involved in tRNA maturation, by removing a 3'-trailer from precursor tRNA.</text>
</comment>
<comment type="catalytic activity">
    <reaction evidence="1">
        <text>Endonucleolytic cleavage of RNA, removing extra 3' nucleotides from tRNA precursor, generating 3' termini of tRNAs. A 3'-hydroxy group is left at the tRNA terminus and a 5'-phosphoryl group is left at the trailer molecule.</text>
        <dbReference type="EC" id="3.1.26.11"/>
    </reaction>
</comment>
<comment type="cofactor">
    <cofactor evidence="1">
        <name>Zn(2+)</name>
        <dbReference type="ChEBI" id="CHEBI:29105"/>
    </cofactor>
    <text evidence="1">Binds 2 Zn(2+) ions.</text>
</comment>
<comment type="subunit">
    <text evidence="1">Homodimer.</text>
</comment>
<comment type="similarity">
    <text evidence="1">Belongs to the RNase Z family.</text>
</comment>
<organism>
    <name type="scientific">Rippkaea orientalis (strain PCC 8801 / RF-1)</name>
    <name type="common">Cyanothece sp. (strain PCC 8801)</name>
    <dbReference type="NCBI Taxonomy" id="41431"/>
    <lineage>
        <taxon>Bacteria</taxon>
        <taxon>Bacillati</taxon>
        <taxon>Cyanobacteriota</taxon>
        <taxon>Cyanophyceae</taxon>
        <taxon>Oscillatoriophycideae</taxon>
        <taxon>Chroococcales</taxon>
        <taxon>Aphanothecaceae</taxon>
        <taxon>Rippkaea</taxon>
        <taxon>Rippkaea orientalis</taxon>
    </lineage>
</organism>
<proteinExistence type="inferred from homology"/>
<protein>
    <recommendedName>
        <fullName evidence="1">Ribonuclease Z</fullName>
        <shortName evidence="1">RNase Z</shortName>
        <ecNumber evidence="1">3.1.26.11</ecNumber>
    </recommendedName>
    <alternativeName>
        <fullName evidence="1">tRNA 3 endonuclease</fullName>
    </alternativeName>
    <alternativeName>
        <fullName evidence="1">tRNase Z</fullName>
    </alternativeName>
</protein>
<evidence type="ECO:0000255" key="1">
    <source>
        <dbReference type="HAMAP-Rule" id="MF_01818"/>
    </source>
</evidence>